<gene>
    <name evidence="1" type="primary">astD</name>
    <name type="ordered locus">EC55989_1914</name>
</gene>
<sequence length="492" mass="53101">MTLWINGDWITGQGASRVKRNPVSGEVLWQGNDADAAQVEQACRAARAAFPRWARLSLAERQVVVERFAGLLERNKGELTAIIARETGKPRWEAATEVTAMINKIAISIKAYHVRTGEQRSEMPDGAASLRHRPHGVLAVFGPYNFPGHLPNGHIVPALLAGNTIIFKPSELTPWSGEAVMRLWQQAGLPPGVLNLVQGGRETGQALSALEDLDGLLFTGSANTGYQLHRQLSGQPEKILALEMGGNNPLIIDEVADIDAAVHLTIQSAFVTAGQRCTCARRLLLKSGAQGDAFLARLVAVSQRLTPGNWDDEPQPFIGGLISEQAAQQVVTAWQQLEAMGGRTLLAPRLLQSETSLLTPGIIEMTGVAGVPDEEVFGPLLRVWRYDSFEEAILMANNTRFGLSCGLVSPEREKFDQLLLEARAGIVNWNKPLTGAASTAPFGGIGASGNHRPSAWYAADYCAWPMASLESDSLTLPATLNPGLDFSDEVVR</sequence>
<name>ASTD_ECO55</name>
<organism>
    <name type="scientific">Escherichia coli (strain 55989 / EAEC)</name>
    <dbReference type="NCBI Taxonomy" id="585055"/>
    <lineage>
        <taxon>Bacteria</taxon>
        <taxon>Pseudomonadati</taxon>
        <taxon>Pseudomonadota</taxon>
        <taxon>Gammaproteobacteria</taxon>
        <taxon>Enterobacterales</taxon>
        <taxon>Enterobacteriaceae</taxon>
        <taxon>Escherichia</taxon>
    </lineage>
</organism>
<accession>B7L6M0</accession>
<comment type="function">
    <text evidence="1">Catalyzes the NAD-dependent reduction of succinylglutamate semialdehyde into succinylglutamate.</text>
</comment>
<comment type="catalytic activity">
    <reaction evidence="1">
        <text>N-succinyl-L-glutamate 5-semialdehyde + NAD(+) + H2O = N-succinyl-L-glutamate + NADH + 2 H(+)</text>
        <dbReference type="Rhea" id="RHEA:10812"/>
        <dbReference type="ChEBI" id="CHEBI:15377"/>
        <dbReference type="ChEBI" id="CHEBI:15378"/>
        <dbReference type="ChEBI" id="CHEBI:57540"/>
        <dbReference type="ChEBI" id="CHEBI:57945"/>
        <dbReference type="ChEBI" id="CHEBI:58520"/>
        <dbReference type="ChEBI" id="CHEBI:58763"/>
        <dbReference type="EC" id="1.2.1.71"/>
    </reaction>
</comment>
<comment type="pathway">
    <text evidence="1">Amino-acid degradation; L-arginine degradation via AST pathway; L-glutamate and succinate from L-arginine: step 4/5.</text>
</comment>
<comment type="similarity">
    <text evidence="1">Belongs to the aldehyde dehydrogenase family. AstD subfamily.</text>
</comment>
<feature type="chain" id="PRO_1000164403" description="N-succinylglutamate 5-semialdehyde dehydrogenase">
    <location>
        <begin position="1"/>
        <end position="492"/>
    </location>
</feature>
<feature type="active site" evidence="1">
    <location>
        <position position="243"/>
    </location>
</feature>
<feature type="active site" evidence="1">
    <location>
        <position position="277"/>
    </location>
</feature>
<feature type="binding site" evidence="1">
    <location>
        <begin position="220"/>
        <end position="225"/>
    </location>
    <ligand>
        <name>NAD(+)</name>
        <dbReference type="ChEBI" id="CHEBI:57540"/>
    </ligand>
</feature>
<dbReference type="EC" id="1.2.1.71" evidence="1"/>
<dbReference type="EMBL" id="CU928145">
    <property type="protein sequence ID" value="CAU97773.1"/>
    <property type="molecule type" value="Genomic_DNA"/>
</dbReference>
<dbReference type="RefSeq" id="WP_000177212.1">
    <property type="nucleotide sequence ID" value="NC_011748.1"/>
</dbReference>
<dbReference type="SMR" id="B7L6M0"/>
<dbReference type="KEGG" id="eck:EC55989_1914"/>
<dbReference type="HOGENOM" id="CLU_005391_1_0_6"/>
<dbReference type="UniPathway" id="UPA00185">
    <property type="reaction ID" value="UER00282"/>
</dbReference>
<dbReference type="Proteomes" id="UP000000746">
    <property type="component" value="Chromosome"/>
</dbReference>
<dbReference type="GO" id="GO:0004030">
    <property type="term" value="F:aldehyde dehydrogenase [NAD(P)+] activity"/>
    <property type="evidence" value="ECO:0007669"/>
    <property type="project" value="UniProtKB-ARBA"/>
</dbReference>
<dbReference type="GO" id="GO:0043824">
    <property type="term" value="F:succinylglutamate-semialdehyde dehydrogenase activity"/>
    <property type="evidence" value="ECO:0007669"/>
    <property type="project" value="UniProtKB-EC"/>
</dbReference>
<dbReference type="GO" id="GO:0019544">
    <property type="term" value="P:arginine catabolic process to glutamate"/>
    <property type="evidence" value="ECO:0007669"/>
    <property type="project" value="UniProtKB-UniRule"/>
</dbReference>
<dbReference type="GO" id="GO:0019545">
    <property type="term" value="P:arginine catabolic process to succinate"/>
    <property type="evidence" value="ECO:0007669"/>
    <property type="project" value="UniProtKB-UniRule"/>
</dbReference>
<dbReference type="CDD" id="cd07095">
    <property type="entry name" value="ALDH_SGSD_AstD"/>
    <property type="match status" value="1"/>
</dbReference>
<dbReference type="FunFam" id="3.40.309.10:FF:000013">
    <property type="entry name" value="N-succinylglutamate 5-semialdehyde dehydrogenase"/>
    <property type="match status" value="1"/>
</dbReference>
<dbReference type="FunFam" id="3.40.605.10:FF:000010">
    <property type="entry name" value="N-succinylglutamate 5-semialdehyde dehydrogenase"/>
    <property type="match status" value="1"/>
</dbReference>
<dbReference type="Gene3D" id="3.40.605.10">
    <property type="entry name" value="Aldehyde Dehydrogenase, Chain A, domain 1"/>
    <property type="match status" value="1"/>
</dbReference>
<dbReference type="Gene3D" id="3.40.309.10">
    <property type="entry name" value="Aldehyde Dehydrogenase, Chain A, domain 2"/>
    <property type="match status" value="1"/>
</dbReference>
<dbReference type="HAMAP" id="MF_01174">
    <property type="entry name" value="Aldedh_AstD"/>
    <property type="match status" value="1"/>
</dbReference>
<dbReference type="InterPro" id="IPR016161">
    <property type="entry name" value="Ald_DH/histidinol_DH"/>
</dbReference>
<dbReference type="InterPro" id="IPR016163">
    <property type="entry name" value="Ald_DH_C"/>
</dbReference>
<dbReference type="InterPro" id="IPR016160">
    <property type="entry name" value="Ald_DH_CS_CYS"/>
</dbReference>
<dbReference type="InterPro" id="IPR029510">
    <property type="entry name" value="Ald_DH_CS_GLU"/>
</dbReference>
<dbReference type="InterPro" id="IPR016162">
    <property type="entry name" value="Ald_DH_N"/>
</dbReference>
<dbReference type="InterPro" id="IPR015590">
    <property type="entry name" value="Aldehyde_DH_dom"/>
</dbReference>
<dbReference type="InterPro" id="IPR017649">
    <property type="entry name" value="SuccinylGlu_semiald_DH_AstD"/>
</dbReference>
<dbReference type="NCBIfam" id="TIGR03240">
    <property type="entry name" value="arg_catab_astD"/>
    <property type="match status" value="1"/>
</dbReference>
<dbReference type="NCBIfam" id="NF006992">
    <property type="entry name" value="PRK09457.1"/>
    <property type="match status" value="1"/>
</dbReference>
<dbReference type="PANTHER" id="PTHR11699">
    <property type="entry name" value="ALDEHYDE DEHYDROGENASE-RELATED"/>
    <property type="match status" value="1"/>
</dbReference>
<dbReference type="Pfam" id="PF00171">
    <property type="entry name" value="Aldedh"/>
    <property type="match status" value="1"/>
</dbReference>
<dbReference type="SUPFAM" id="SSF53720">
    <property type="entry name" value="ALDH-like"/>
    <property type="match status" value="1"/>
</dbReference>
<dbReference type="PROSITE" id="PS00070">
    <property type="entry name" value="ALDEHYDE_DEHYDR_CYS"/>
    <property type="match status" value="1"/>
</dbReference>
<dbReference type="PROSITE" id="PS00687">
    <property type="entry name" value="ALDEHYDE_DEHYDR_GLU"/>
    <property type="match status" value="1"/>
</dbReference>
<keyword id="KW-0056">Arginine metabolism</keyword>
<keyword id="KW-0520">NAD</keyword>
<keyword id="KW-0560">Oxidoreductase</keyword>
<keyword id="KW-1185">Reference proteome</keyword>
<reference key="1">
    <citation type="journal article" date="2009" name="PLoS Genet.">
        <title>Organised genome dynamics in the Escherichia coli species results in highly diverse adaptive paths.</title>
        <authorList>
            <person name="Touchon M."/>
            <person name="Hoede C."/>
            <person name="Tenaillon O."/>
            <person name="Barbe V."/>
            <person name="Baeriswyl S."/>
            <person name="Bidet P."/>
            <person name="Bingen E."/>
            <person name="Bonacorsi S."/>
            <person name="Bouchier C."/>
            <person name="Bouvet O."/>
            <person name="Calteau A."/>
            <person name="Chiapello H."/>
            <person name="Clermont O."/>
            <person name="Cruveiller S."/>
            <person name="Danchin A."/>
            <person name="Diard M."/>
            <person name="Dossat C."/>
            <person name="Karoui M.E."/>
            <person name="Frapy E."/>
            <person name="Garry L."/>
            <person name="Ghigo J.M."/>
            <person name="Gilles A.M."/>
            <person name="Johnson J."/>
            <person name="Le Bouguenec C."/>
            <person name="Lescat M."/>
            <person name="Mangenot S."/>
            <person name="Martinez-Jehanne V."/>
            <person name="Matic I."/>
            <person name="Nassif X."/>
            <person name="Oztas S."/>
            <person name="Petit M.A."/>
            <person name="Pichon C."/>
            <person name="Rouy Z."/>
            <person name="Ruf C.S."/>
            <person name="Schneider D."/>
            <person name="Tourret J."/>
            <person name="Vacherie B."/>
            <person name="Vallenet D."/>
            <person name="Medigue C."/>
            <person name="Rocha E.P.C."/>
            <person name="Denamur E."/>
        </authorList>
    </citation>
    <scope>NUCLEOTIDE SEQUENCE [LARGE SCALE GENOMIC DNA]</scope>
    <source>
        <strain>55989 / EAEC</strain>
    </source>
</reference>
<proteinExistence type="inferred from homology"/>
<protein>
    <recommendedName>
        <fullName evidence="1">N-succinylglutamate 5-semialdehyde dehydrogenase</fullName>
        <ecNumber evidence="1">1.2.1.71</ecNumber>
    </recommendedName>
    <alternativeName>
        <fullName evidence="1">Succinylglutamic semialdehyde dehydrogenase</fullName>
        <shortName evidence="1">SGSD</shortName>
    </alternativeName>
</protein>
<evidence type="ECO:0000255" key="1">
    <source>
        <dbReference type="HAMAP-Rule" id="MF_01174"/>
    </source>
</evidence>